<reference key="1">
    <citation type="journal article" date="2002" name="Science">
        <title>Biosynthesis of the enediyne antitumor antibiotic C-1027.</title>
        <authorList>
            <person name="Liu W."/>
            <person name="Christenson S.D."/>
            <person name="Standage S."/>
            <person name="Shen B."/>
        </authorList>
    </citation>
    <scope>NUCLEOTIDE SEQUENCE [GENOMIC DNA]</scope>
    <source>
        <strain>C-1027</strain>
    </source>
</reference>
<reference key="2">
    <citation type="journal article" date="2008" name="Proc. Natl. Acad. Sci. U.S.A.">
        <title>Biosynthesis of the enediyne antitumor antibiotic C-1027 involves a new branching point in chorismate metabolism.</title>
        <authorList>
            <person name="Van Lanen S.G."/>
            <person name="Lin S."/>
            <person name="Shen B."/>
        </authorList>
    </citation>
    <scope>FUNCTION</scope>
    <scope>CATALYTIC ACTIVITY</scope>
    <scope>COFACTOR</scope>
    <source>
        <strain>C-1027</strain>
    </source>
</reference>
<sequence length="493" mass="53461">MTDQCVVSAPVRVRTRRLDVKETGALPAYRALAEHFGPDEVYLLESAAGPARDRRHQFVGFGALLSLSVTDRVVRVEGVPALRGLLLERAGALLEDGPQGLRLRTAGGLWPLLRAMRDMFDAEGSASGFRFGFLGFFGYDTARYIEDLPHLIENRPGLPDVRMVLHRGSVVTDLATGRCELLLHESPYWPGLAPETVTGLLADVEQAWPDPSADGFPASAVTDDSAPEVFANDVERCLKHIAVGDIYQVQIGHELSIRSTADPADVYQRLRGRNASPYMYLAGIDGHRLIGASPELFVRIEDGEVTMRPIAGTVPRSGADGGIAAGVRLRSDPKEIAEHTMLVDLCRNDIGRIARPNTLDVPDQLDVEGYSHVLHLVSTVVGRARVDTDAFDTIAALFPAGTMTGAPKIRAMEIIESVERSRRGLYAGALGLLDVGGYTNLALCIRTLFHHEGVYRTRASAGIVADSEPGAEWTETLAKMSATHWAVTGEELL</sequence>
<evidence type="ECO:0000269" key="1">
    <source>
    </source>
</evidence>
<evidence type="ECO:0000305" key="2"/>
<proteinExistence type="evidence at protein level"/>
<accession>Q8GMH4</accession>
<dbReference type="EC" id="2.6.1.86"/>
<dbReference type="EMBL" id="AY048670">
    <property type="protein sequence ID" value="AAL06664.1"/>
    <property type="molecule type" value="Genomic_DNA"/>
</dbReference>
<dbReference type="SMR" id="Q8GMH4"/>
<dbReference type="GeneID" id="94023093"/>
<dbReference type="KEGG" id="ag:AAL06664"/>
<dbReference type="GO" id="GO:0008483">
    <property type="term" value="F:transaminase activity"/>
    <property type="evidence" value="ECO:0000314"/>
    <property type="project" value="UniProtKB"/>
</dbReference>
<dbReference type="GO" id="GO:0017000">
    <property type="term" value="P:antibiotic biosynthetic process"/>
    <property type="evidence" value="ECO:0000314"/>
    <property type="project" value="UniProtKB"/>
</dbReference>
<dbReference type="GO" id="GO:0000162">
    <property type="term" value="P:L-tryptophan biosynthetic process"/>
    <property type="evidence" value="ECO:0007669"/>
    <property type="project" value="TreeGrafter"/>
</dbReference>
<dbReference type="Gene3D" id="3.60.120.10">
    <property type="entry name" value="Anthranilate synthase"/>
    <property type="match status" value="1"/>
</dbReference>
<dbReference type="InterPro" id="IPR005801">
    <property type="entry name" value="ADC_synthase"/>
</dbReference>
<dbReference type="InterPro" id="IPR019999">
    <property type="entry name" value="Anth_synth_I-like"/>
</dbReference>
<dbReference type="InterPro" id="IPR006805">
    <property type="entry name" value="Anth_synth_I_N"/>
</dbReference>
<dbReference type="InterPro" id="IPR015890">
    <property type="entry name" value="Chorismate_C"/>
</dbReference>
<dbReference type="PANTHER" id="PTHR11236">
    <property type="entry name" value="AMINOBENZOATE/ANTHRANILATE SYNTHASE"/>
    <property type="match status" value="1"/>
</dbReference>
<dbReference type="PANTHER" id="PTHR11236:SF9">
    <property type="entry name" value="ANTHRANILATE SYNTHASE COMPONENT 1"/>
    <property type="match status" value="1"/>
</dbReference>
<dbReference type="Pfam" id="PF04715">
    <property type="entry name" value="Anth_synt_I_N"/>
    <property type="match status" value="1"/>
</dbReference>
<dbReference type="Pfam" id="PF00425">
    <property type="entry name" value="Chorismate_bind"/>
    <property type="match status" value="1"/>
</dbReference>
<dbReference type="PRINTS" id="PR00095">
    <property type="entry name" value="ANTSNTHASEI"/>
</dbReference>
<dbReference type="SUPFAM" id="SSF56322">
    <property type="entry name" value="ADC synthase"/>
    <property type="match status" value="1"/>
</dbReference>
<protein>
    <recommendedName>
        <fullName>2-amino-4-deoxychorismate synthase</fullName>
        <shortName>ADIC synthase</shortName>
        <ecNumber>2.6.1.86</ecNumber>
    </recommendedName>
</protein>
<organism>
    <name type="scientific">Streptomyces globisporus</name>
    <dbReference type="NCBI Taxonomy" id="1908"/>
    <lineage>
        <taxon>Bacteria</taxon>
        <taxon>Bacillati</taxon>
        <taxon>Actinomycetota</taxon>
        <taxon>Actinomycetes</taxon>
        <taxon>Kitasatosporales</taxon>
        <taxon>Streptomycetaceae</taxon>
        <taxon>Streptomyces</taxon>
    </lineage>
</organism>
<keyword id="KW-0045">Antibiotic biosynthesis</keyword>
<keyword id="KW-0460">Magnesium</keyword>
<keyword id="KW-0808">Transferase</keyword>
<gene>
    <name type="primary">sgcD</name>
</gene>
<name>SGCD_STRGL</name>
<feature type="chain" id="PRO_0000418509" description="2-amino-4-deoxychorismate synthase">
    <location>
        <begin position="1"/>
        <end position="493"/>
    </location>
</feature>
<comment type="function">
    <text evidence="1">Converts chorismate to 2-amino-4-deoxychorismate (ADIC). Involved in the biosynthesis of the benzoxazolinate moiety of the enediyne antitumor antibiotic C-1027.</text>
</comment>
<comment type="catalytic activity">
    <reaction evidence="1">
        <text>(2S)-2-amino-4-deoxychorismate + L-glutamate = chorismate + L-glutamine</text>
        <dbReference type="Rhea" id="RHEA:25512"/>
        <dbReference type="ChEBI" id="CHEBI:29748"/>
        <dbReference type="ChEBI" id="CHEBI:29985"/>
        <dbReference type="ChEBI" id="CHEBI:58359"/>
        <dbReference type="ChEBI" id="CHEBI:58792"/>
        <dbReference type="EC" id="2.6.1.86"/>
    </reaction>
</comment>
<comment type="cofactor">
    <cofactor evidence="1">
        <name>Mg(2+)</name>
        <dbReference type="ChEBI" id="CHEBI:18420"/>
    </cofactor>
</comment>
<comment type="similarity">
    <text evidence="2">Belongs to the anthranilate synthase component I family.</text>
</comment>